<comment type="function">
    <text evidence="1">DNA polymerase involved in damage-induced mutagenesis and translesion synthesis (TLS). It is not the major replicative DNA polymerase.</text>
</comment>
<comment type="catalytic activity">
    <reaction evidence="1">
        <text>DNA(n) + a 2'-deoxyribonucleoside 5'-triphosphate = DNA(n+1) + diphosphate</text>
        <dbReference type="Rhea" id="RHEA:22508"/>
        <dbReference type="Rhea" id="RHEA-COMP:17339"/>
        <dbReference type="Rhea" id="RHEA-COMP:17340"/>
        <dbReference type="ChEBI" id="CHEBI:33019"/>
        <dbReference type="ChEBI" id="CHEBI:61560"/>
        <dbReference type="ChEBI" id="CHEBI:173112"/>
        <dbReference type="EC" id="2.7.7.7"/>
    </reaction>
</comment>
<comment type="subcellular location">
    <subcellularLocation>
        <location evidence="1">Cytoplasm</location>
    </subcellularLocation>
</comment>
<comment type="similarity">
    <text evidence="1">Belongs to the DNA polymerase type-C family. DnaE2 subfamily.</text>
</comment>
<gene>
    <name evidence="1" type="primary">dnaE2</name>
    <name type="ordered locus">Avi_2294</name>
</gene>
<dbReference type="EC" id="2.7.7.7" evidence="1"/>
<dbReference type="EMBL" id="CP000633">
    <property type="protein sequence ID" value="ACM36640.1"/>
    <property type="molecule type" value="Genomic_DNA"/>
</dbReference>
<dbReference type="RefSeq" id="WP_015916061.1">
    <property type="nucleotide sequence ID" value="NC_011989.1"/>
</dbReference>
<dbReference type="SMR" id="B9JWL2"/>
<dbReference type="STRING" id="311402.Avi_2294"/>
<dbReference type="KEGG" id="avi:Avi_2294"/>
<dbReference type="eggNOG" id="COG0587">
    <property type="taxonomic scope" value="Bacteria"/>
</dbReference>
<dbReference type="HOGENOM" id="CLU_001600_4_0_5"/>
<dbReference type="Proteomes" id="UP000001596">
    <property type="component" value="Chromosome 1"/>
</dbReference>
<dbReference type="GO" id="GO:0005737">
    <property type="term" value="C:cytoplasm"/>
    <property type="evidence" value="ECO:0007669"/>
    <property type="project" value="UniProtKB-SubCell"/>
</dbReference>
<dbReference type="GO" id="GO:0008408">
    <property type="term" value="F:3'-5' exonuclease activity"/>
    <property type="evidence" value="ECO:0007669"/>
    <property type="project" value="InterPro"/>
</dbReference>
<dbReference type="GO" id="GO:0003887">
    <property type="term" value="F:DNA-directed DNA polymerase activity"/>
    <property type="evidence" value="ECO:0007669"/>
    <property type="project" value="UniProtKB-UniRule"/>
</dbReference>
<dbReference type="GO" id="GO:0003676">
    <property type="term" value="F:nucleic acid binding"/>
    <property type="evidence" value="ECO:0007669"/>
    <property type="project" value="InterPro"/>
</dbReference>
<dbReference type="GO" id="GO:0006281">
    <property type="term" value="P:DNA repair"/>
    <property type="evidence" value="ECO:0007669"/>
    <property type="project" value="UniProtKB-UniRule"/>
</dbReference>
<dbReference type="GO" id="GO:0006260">
    <property type="term" value="P:DNA replication"/>
    <property type="evidence" value="ECO:0007669"/>
    <property type="project" value="UniProtKB-KW"/>
</dbReference>
<dbReference type="CDD" id="cd04485">
    <property type="entry name" value="DnaE_OBF"/>
    <property type="match status" value="1"/>
</dbReference>
<dbReference type="CDD" id="cd07434">
    <property type="entry name" value="PHP_PolIIIA_DnaE2"/>
    <property type="match status" value="1"/>
</dbReference>
<dbReference type="FunFam" id="1.10.150.870:FF:000002">
    <property type="entry name" value="Error-prone DNA polymerase"/>
    <property type="match status" value="1"/>
</dbReference>
<dbReference type="Gene3D" id="1.10.150.870">
    <property type="match status" value="1"/>
</dbReference>
<dbReference type="Gene3D" id="3.20.20.140">
    <property type="entry name" value="Metal-dependent hydrolases"/>
    <property type="match status" value="1"/>
</dbReference>
<dbReference type="HAMAP" id="MF_01902">
    <property type="entry name" value="DNApol_error_prone"/>
    <property type="match status" value="1"/>
</dbReference>
<dbReference type="InterPro" id="IPR011708">
    <property type="entry name" value="DNA_pol3_alpha_NTPase_dom"/>
</dbReference>
<dbReference type="InterPro" id="IPR040982">
    <property type="entry name" value="DNA_pol3_finger"/>
</dbReference>
<dbReference type="InterPro" id="IPR023073">
    <property type="entry name" value="DnaE2"/>
</dbReference>
<dbReference type="InterPro" id="IPR004805">
    <property type="entry name" value="DnaE2/DnaE/PolC"/>
</dbReference>
<dbReference type="InterPro" id="IPR029460">
    <property type="entry name" value="DNAPol_HHH"/>
</dbReference>
<dbReference type="InterPro" id="IPR004365">
    <property type="entry name" value="NA-bd_OB_tRNA"/>
</dbReference>
<dbReference type="InterPro" id="IPR004013">
    <property type="entry name" value="PHP_dom"/>
</dbReference>
<dbReference type="InterPro" id="IPR003141">
    <property type="entry name" value="Pol/His_phosphatase_N"/>
</dbReference>
<dbReference type="InterPro" id="IPR016195">
    <property type="entry name" value="Pol/histidinol_Pase-like"/>
</dbReference>
<dbReference type="NCBIfam" id="TIGR00594">
    <property type="entry name" value="polc"/>
    <property type="match status" value="1"/>
</dbReference>
<dbReference type="NCBIfam" id="NF004225">
    <property type="entry name" value="PRK05672.1"/>
    <property type="match status" value="1"/>
</dbReference>
<dbReference type="PANTHER" id="PTHR32294">
    <property type="entry name" value="DNA POLYMERASE III SUBUNIT ALPHA"/>
    <property type="match status" value="1"/>
</dbReference>
<dbReference type="PANTHER" id="PTHR32294:SF4">
    <property type="entry name" value="ERROR-PRONE DNA POLYMERASE"/>
    <property type="match status" value="1"/>
</dbReference>
<dbReference type="Pfam" id="PF07733">
    <property type="entry name" value="DNA_pol3_alpha"/>
    <property type="match status" value="1"/>
</dbReference>
<dbReference type="Pfam" id="PF17657">
    <property type="entry name" value="DNA_pol3_finger"/>
    <property type="match status" value="1"/>
</dbReference>
<dbReference type="Pfam" id="PF14579">
    <property type="entry name" value="HHH_6"/>
    <property type="match status" value="1"/>
</dbReference>
<dbReference type="Pfam" id="PF02811">
    <property type="entry name" value="PHP"/>
    <property type="match status" value="1"/>
</dbReference>
<dbReference type="Pfam" id="PF01336">
    <property type="entry name" value="tRNA_anti-codon"/>
    <property type="match status" value="1"/>
</dbReference>
<dbReference type="SMART" id="SM00481">
    <property type="entry name" value="POLIIIAc"/>
    <property type="match status" value="1"/>
</dbReference>
<dbReference type="SUPFAM" id="SSF89550">
    <property type="entry name" value="PHP domain-like"/>
    <property type="match status" value="1"/>
</dbReference>
<accession>B9JWL2</accession>
<protein>
    <recommendedName>
        <fullName evidence="1">Error-prone DNA polymerase</fullName>
        <ecNumber evidence="1">2.7.7.7</ecNumber>
    </recommendedName>
</protein>
<organism>
    <name type="scientific">Allorhizobium ampelinum (strain ATCC BAA-846 / DSM 112012 / S4)</name>
    <name type="common">Agrobacterium vitis (strain S4)</name>
    <dbReference type="NCBI Taxonomy" id="311402"/>
    <lineage>
        <taxon>Bacteria</taxon>
        <taxon>Pseudomonadati</taxon>
        <taxon>Pseudomonadota</taxon>
        <taxon>Alphaproteobacteria</taxon>
        <taxon>Hyphomicrobiales</taxon>
        <taxon>Rhizobiaceae</taxon>
        <taxon>Rhizobium/Agrobacterium group</taxon>
        <taxon>Allorhizobium</taxon>
        <taxon>Allorhizobium ampelinum</taxon>
    </lineage>
</organism>
<sequence>MRYAELQVTTHFSFLRGASSAIELFETAKSLGIDAIGVVDRNSLAGIVRALEASRATGVRLVVGCRLDLQDGMSILVYPTDRTAYSRLARLITLGKGRGGKDNCILMLDDIAQYGEGLLGILVPDLADDTCAVQLRKMAEVFGDLAYLSLCLRRRPNDQLRLHELSNMATRFKVKTVVTNDVLFHEPGRRQLQDIVTCIRNNTTIDTVGFERERHADRYLKPPEEMERLFPRYRQALRRTMEIVDRCKFSLEELTYQYPEEAIVPRKTAQESLEHYVWQCVPDRYPQGLPPKTLQIIRHELDLIHKMKYAPYFLTVFSIVRFARAKGILCQGRGSAANSAVCYILGVTSIDPETNNLLFERFVSQERDEPPDIDVDFEHERREEVIQWIYKTYGKEKAALCATVNRYRAKGAIRDVGKALGLPEDLIKALSSGMWSWSQETSDRNVRELNLNPDDRRLTLTLQLAQQLMGAPRHLGQHPGGFVLTHDRLDDLVPIEPSTMEDRQIIEWDKDDVEALKFMKVDVLALGMLTCMSKVFALIREHKGDDLDLAKIRQEDKATYEMICKADTLGTFQIESRAQMAMLPRLKPKTFYDLVVQVAIVRPGPIQGDMVHPYLRRREKKEDVDYPTPELEAVLGKTLGVPLFQESAMRVAMVCAGFTGGEADQLRKSMATFKFTGGVSRFKEKLVSGMVKNGYTPEFAEKTFSRLEGFGSYGFPESHAASFALIAYASNYVKCHFPDVFCAALLNSQPMGFYAPAQIVGDARAHGVEVRPVCVNRSRWDCTLERIGTTQQHAVRLGMRMVKGLVVADVARIVAARMNGPFDSVDDMWRRSGVPAASLVELAHADAFQPSLKLARRDVLWAIKALRDEPLPLFAAAAEREMKTIAEQNEPEVELRQMTKGHNVVEDYGHIGLTLRDHPIAFLRTDLAKRNIVTCEEAMTARDGRWVITAGLVLVRQKPGSAKGVMFITIEDETGPANIVVWPKLFEKRRRIVLGSSMMAIHGRIQREGEVVHLIAQQLFDLTSDLSGLADRDMEFKLPTGRGDEFAHGSPGGGDSRDRSPPKPRDIVVPLCRARHKGIDPEPETMPSAFPKPRDFR</sequence>
<reference key="1">
    <citation type="journal article" date="2009" name="J. Bacteriol.">
        <title>Genome sequences of three Agrobacterium biovars help elucidate the evolution of multichromosome genomes in bacteria.</title>
        <authorList>
            <person name="Slater S.C."/>
            <person name="Goldman B.S."/>
            <person name="Goodner B."/>
            <person name="Setubal J.C."/>
            <person name="Farrand S.K."/>
            <person name="Nester E.W."/>
            <person name="Burr T.J."/>
            <person name="Banta L."/>
            <person name="Dickerman A.W."/>
            <person name="Paulsen I."/>
            <person name="Otten L."/>
            <person name="Suen G."/>
            <person name="Welch R."/>
            <person name="Almeida N.F."/>
            <person name="Arnold F."/>
            <person name="Burton O.T."/>
            <person name="Du Z."/>
            <person name="Ewing A."/>
            <person name="Godsy E."/>
            <person name="Heisel S."/>
            <person name="Houmiel K.L."/>
            <person name="Jhaveri J."/>
            <person name="Lu J."/>
            <person name="Miller N.M."/>
            <person name="Norton S."/>
            <person name="Chen Q."/>
            <person name="Phoolcharoen W."/>
            <person name="Ohlin V."/>
            <person name="Ondrusek D."/>
            <person name="Pride N."/>
            <person name="Stricklin S.L."/>
            <person name="Sun J."/>
            <person name="Wheeler C."/>
            <person name="Wilson L."/>
            <person name="Zhu H."/>
            <person name="Wood D.W."/>
        </authorList>
    </citation>
    <scope>NUCLEOTIDE SEQUENCE [LARGE SCALE GENOMIC DNA]</scope>
    <source>
        <strain>ATCC BAA-846 / DSM 112012 / S4</strain>
    </source>
</reference>
<evidence type="ECO:0000255" key="1">
    <source>
        <dbReference type="HAMAP-Rule" id="MF_01902"/>
    </source>
</evidence>
<evidence type="ECO:0000256" key="2">
    <source>
        <dbReference type="SAM" id="MobiDB-lite"/>
    </source>
</evidence>
<feature type="chain" id="PRO_1000188729" description="Error-prone DNA polymerase">
    <location>
        <begin position="1"/>
        <end position="1097"/>
    </location>
</feature>
<feature type="region of interest" description="Disordered" evidence="2">
    <location>
        <begin position="1039"/>
        <end position="1097"/>
    </location>
</feature>
<feature type="compositionally biased region" description="Basic and acidic residues" evidence="2">
    <location>
        <begin position="1055"/>
        <end position="1066"/>
    </location>
</feature>
<keyword id="KW-0963">Cytoplasm</keyword>
<keyword id="KW-0227">DNA damage</keyword>
<keyword id="KW-0234">DNA repair</keyword>
<keyword id="KW-0235">DNA replication</keyword>
<keyword id="KW-0239">DNA-directed DNA polymerase</keyword>
<keyword id="KW-0548">Nucleotidyltransferase</keyword>
<keyword id="KW-1185">Reference proteome</keyword>
<keyword id="KW-0808">Transferase</keyword>
<proteinExistence type="inferred from homology"/>
<name>DNAE2_ALLAM</name>